<organism>
    <name type="scientific">Xenopus tropicalis</name>
    <name type="common">Western clawed frog</name>
    <name type="synonym">Silurana tropicalis</name>
    <dbReference type="NCBI Taxonomy" id="8364"/>
    <lineage>
        <taxon>Eukaryota</taxon>
        <taxon>Metazoa</taxon>
        <taxon>Chordata</taxon>
        <taxon>Craniata</taxon>
        <taxon>Vertebrata</taxon>
        <taxon>Euteleostomi</taxon>
        <taxon>Amphibia</taxon>
        <taxon>Batrachia</taxon>
        <taxon>Anura</taxon>
        <taxon>Pipoidea</taxon>
        <taxon>Pipidae</taxon>
        <taxon>Xenopodinae</taxon>
        <taxon>Xenopus</taxon>
        <taxon>Silurana</taxon>
    </lineage>
</organism>
<proteinExistence type="evidence at transcript level"/>
<keyword id="KW-1003">Cell membrane</keyword>
<keyword id="KW-0472">Membrane</keyword>
<keyword id="KW-1185">Reference proteome</keyword>
<keyword id="KW-0812">Transmembrane</keyword>
<keyword id="KW-1133">Transmembrane helix</keyword>
<feature type="chain" id="PRO_0000324494" description="Solute carrier family 26 member 9">
    <location>
        <begin position="1"/>
        <end position="794"/>
    </location>
</feature>
<feature type="topological domain" description="Cytoplasmic" evidence="2">
    <location>
        <begin position="1"/>
        <end position="70"/>
    </location>
</feature>
<feature type="transmembrane region" description="Helical" evidence="2">
    <location>
        <begin position="71"/>
        <end position="96"/>
    </location>
</feature>
<feature type="topological domain" description="Extracellular" evidence="2">
    <location>
        <begin position="97"/>
        <end position="100"/>
    </location>
</feature>
<feature type="transmembrane region" description="Helical" evidence="2">
    <location>
        <begin position="101"/>
        <end position="109"/>
    </location>
</feature>
<feature type="topological domain" description="Cytoplasmic" evidence="2">
    <location>
        <begin position="110"/>
        <end position="129"/>
    </location>
</feature>
<feature type="transmembrane region" description="Helical" evidence="2">
    <location>
        <begin position="130"/>
        <end position="142"/>
    </location>
</feature>
<feature type="topological domain" description="Extracellular" evidence="2">
    <location>
        <begin position="143"/>
        <end position="160"/>
    </location>
</feature>
<feature type="transmembrane region" description="Helical" evidence="2">
    <location>
        <begin position="161"/>
        <end position="189"/>
    </location>
</feature>
<feature type="topological domain" description="Cytoplasmic" evidence="2">
    <location>
        <begin position="190"/>
        <end position="199"/>
    </location>
</feature>
<feature type="transmembrane region" description="Helical" evidence="2">
    <location>
        <begin position="200"/>
        <end position="222"/>
    </location>
</feature>
<feature type="topological domain" description="Extracellular" evidence="2">
    <location>
        <begin position="223"/>
        <end position="235"/>
    </location>
</feature>
<feature type="intramembrane region" description="Helical" evidence="2">
    <location>
        <begin position="236"/>
        <end position="244"/>
    </location>
</feature>
<feature type="topological domain" description="Extracellular" evidence="2">
    <location>
        <begin position="245"/>
        <end position="252"/>
    </location>
</feature>
<feature type="transmembrane region" description="Helical" evidence="2">
    <location>
        <begin position="253"/>
        <end position="273"/>
    </location>
</feature>
<feature type="topological domain" description="Cytoplasmic" evidence="2">
    <location>
        <begin position="274"/>
        <end position="284"/>
    </location>
</feature>
<feature type="transmembrane region" description="Helical" evidence="2">
    <location>
        <begin position="285"/>
        <end position="297"/>
    </location>
</feature>
<feature type="topological domain" description="Extracellular" evidence="2">
    <location>
        <begin position="298"/>
        <end position="332"/>
    </location>
</feature>
<feature type="transmembrane region" description="Helical" evidence="2">
    <location>
        <begin position="333"/>
        <end position="356"/>
    </location>
</feature>
<feature type="topological domain" description="Cytoplasmic" evidence="2">
    <location>
        <begin position="357"/>
        <end position="363"/>
    </location>
</feature>
<feature type="transmembrane region" description="Helical" evidence="2">
    <location>
        <begin position="364"/>
        <end position="377"/>
    </location>
</feature>
<feature type="topological domain" description="Extracellular" evidence="2">
    <location>
        <begin position="378"/>
        <end position="388"/>
    </location>
</feature>
<feature type="transmembrane region" description="Helical" evidence="2">
    <location>
        <begin position="389"/>
        <end position="398"/>
    </location>
</feature>
<feature type="topological domain" description="Cytoplasmic" evidence="2">
    <location>
        <begin position="399"/>
        <end position="403"/>
    </location>
</feature>
<feature type="transmembrane region" description="Helical" evidence="2">
    <location>
        <begin position="404"/>
        <end position="417"/>
    </location>
</feature>
<feature type="topological domain" description="Extracellular" evidence="2">
    <location>
        <begin position="418"/>
        <end position="429"/>
    </location>
</feature>
<feature type="transmembrane region" description="Helical" evidence="2">
    <location>
        <begin position="430"/>
        <end position="455"/>
    </location>
</feature>
<feature type="topological domain" description="Cytoplasmic" evidence="2">
    <location>
        <begin position="456"/>
        <end position="459"/>
    </location>
</feature>
<feature type="transmembrane region" description="Helical" evidence="2">
    <location>
        <begin position="460"/>
        <end position="474"/>
    </location>
</feature>
<feature type="topological domain" description="Extracellular" evidence="2">
    <location>
        <begin position="475"/>
        <end position="477"/>
    </location>
</feature>
<feature type="transmembrane region" description="Helical" evidence="2">
    <location>
        <begin position="478"/>
        <end position="496"/>
    </location>
</feature>
<feature type="topological domain" description="Cytoplasmic" evidence="2">
    <location>
        <begin position="497"/>
        <end position="794"/>
    </location>
</feature>
<feature type="domain" description="STAS" evidence="3">
    <location>
        <begin position="517"/>
        <end position="739"/>
    </location>
</feature>
<gene>
    <name type="primary">slc26a9</name>
</gene>
<sequence>MNKVRPRYIIDRPAYSVELFNEEYEKKIRSYPIGGKARKLFSCSTSKIKNFIFRLFPILSWLPKYNIKGNLLNDALGGISAGTIQIPQGMAFALLANLPPVNGLYSSFFPLVVYFFMGGIPQMVPGTFAVISIIVGNVCLKLAPESHFQNVTSNGTITNIEAMNTARMHISATLACLTAIIQIALSFVQFGFVAIYLSESFIRGFMTAAGLQILISVLKYIFGVSIPPYSGVLAIIYTFIDICKELPKTNVASLIFALISTVLLIIVKELNMKFMHKIRFPIPMEIIIVIVATAVSGSFKLPERYHMNVVGHIPLGFPSPTVPNVTQWDEMVGTAFSLAIVGYVINLAMGRTLGAKHGFDVDANQEMLALGSGNFFGSFFFIHVICCALSVTLAVDGAGGKSQIASFFVMMSVMVTILALGTYLNPLPKSVLGALIAVNLKNSLKQLSDPFYLWKKSKLDCLVWLVSFFSTFILGLPYGLAVGVAFSILVVIFNTQFRNGSSLNQVTATDIYVNPKVYSKVQPIDGIKIVTYCSPLYFANSEIFRQKVIKKTGLDPGKVYLSKKKYLKQQEQELKKKEQKKKRGSLFMKNKTLSLQELQEDFDGVSPTDSNNNSTVNGTASAISYISSNTLTSGSQTTENVQNGFSTPAQTQDPIIAAPPIVNFHTVIIDMSGVCFVDLMGIKALGKLCTSFQRIGVNVYLADVQAQVYDDIENGGMFAEGSLDRKHLFITVHDAVLYAEANNTGIVNTDSKKKGAGDTEIYITDTQDEISEDYPNLEEAMFGSMFQTEIQTAL</sequence>
<comment type="function">
    <text evidence="1">Ion transporter that can act both as an ion channel and anion exchanger. Mainly acts as a chloride channel, which mediate uncoupled chloride anion transport in an alternate-access mechanism where a saturable binding site is alternately exposed to either one or the other side of the membrane. Also acts as a DIDS- and thiosulfate- sensitive anion exchanger the exchange of chloride for bicarbonate ions across the cell membrane.</text>
</comment>
<comment type="catalytic activity">
    <reaction evidence="1">
        <text>chloride(in) = chloride(out)</text>
        <dbReference type="Rhea" id="RHEA:29823"/>
        <dbReference type="ChEBI" id="CHEBI:17996"/>
    </reaction>
</comment>
<comment type="catalytic activity">
    <reaction evidence="1">
        <text>hydrogencarbonate(in) + chloride(out) = hydrogencarbonate(out) + chloride(in)</text>
        <dbReference type="Rhea" id="RHEA:72363"/>
        <dbReference type="ChEBI" id="CHEBI:17544"/>
        <dbReference type="ChEBI" id="CHEBI:17996"/>
    </reaction>
</comment>
<comment type="activity regulation">
    <text evidence="2">Inhibited by ammonium and thiosulfate.</text>
</comment>
<comment type="subunit">
    <text evidence="1">Homodimer.</text>
</comment>
<comment type="subcellular location">
    <subcellularLocation>
        <location evidence="1">Cell membrane</location>
        <topology evidence="1">Multi-pass membrane protein</topology>
    </subcellularLocation>
    <subcellularLocation>
        <location evidence="1">Endomembrane system</location>
        <topology evidence="1">Multi-pass membrane protein</topology>
    </subcellularLocation>
</comment>
<comment type="similarity">
    <text evidence="4">Belongs to the SLC26A/SulP transporter (TC 2.A.53) family.</text>
</comment>
<dbReference type="EMBL" id="BC135993">
    <property type="protein sequence ID" value="AAI35994.1"/>
    <property type="molecule type" value="mRNA"/>
</dbReference>
<dbReference type="RefSeq" id="NP_001096210.1">
    <property type="nucleotide sequence ID" value="NM_001102740.1"/>
</dbReference>
<dbReference type="SMR" id="A4IIF2"/>
<dbReference type="FunCoup" id="A4IIF2">
    <property type="interactions" value="80"/>
</dbReference>
<dbReference type="STRING" id="8364.ENSXETP00000028227"/>
<dbReference type="PaxDb" id="8364-ENSXETP00000013074"/>
<dbReference type="DNASU" id="100124761"/>
<dbReference type="GeneID" id="100124761"/>
<dbReference type="KEGG" id="xtr:100124761"/>
<dbReference type="AGR" id="Xenbase:XB-GENE-996559"/>
<dbReference type="CTD" id="115019"/>
<dbReference type="Xenbase" id="XB-GENE-996559">
    <property type="gene designation" value="slc26a9"/>
</dbReference>
<dbReference type="eggNOG" id="KOG0236">
    <property type="taxonomic scope" value="Eukaryota"/>
</dbReference>
<dbReference type="InParanoid" id="A4IIF2"/>
<dbReference type="OrthoDB" id="288203at2759"/>
<dbReference type="Reactome" id="R-XTR-427601">
    <property type="pathway name" value="Multifunctional anion exchangers"/>
</dbReference>
<dbReference type="Proteomes" id="UP000008143">
    <property type="component" value="Chromosome 2"/>
</dbReference>
<dbReference type="GO" id="GO:0005789">
    <property type="term" value="C:endoplasmic reticulum membrane"/>
    <property type="evidence" value="ECO:0000250"/>
    <property type="project" value="UniProtKB"/>
</dbReference>
<dbReference type="GO" id="GO:0010008">
    <property type="term" value="C:endosome membrane"/>
    <property type="evidence" value="ECO:0000250"/>
    <property type="project" value="UniProtKB"/>
</dbReference>
<dbReference type="GO" id="GO:0000139">
    <property type="term" value="C:Golgi membrane"/>
    <property type="evidence" value="ECO:0000250"/>
    <property type="project" value="UniProtKB"/>
</dbReference>
<dbReference type="GO" id="GO:0005886">
    <property type="term" value="C:plasma membrane"/>
    <property type="evidence" value="ECO:0000250"/>
    <property type="project" value="UniProtKB"/>
</dbReference>
<dbReference type="GO" id="GO:0055085">
    <property type="term" value="P:transmembrane transport"/>
    <property type="evidence" value="ECO:0007669"/>
    <property type="project" value="InterPro"/>
</dbReference>
<dbReference type="CDD" id="cd07042">
    <property type="entry name" value="STAS_SulP_like_sulfate_transporter"/>
    <property type="match status" value="1"/>
</dbReference>
<dbReference type="Gene3D" id="3.30.750.24">
    <property type="entry name" value="STAS domain"/>
    <property type="match status" value="1"/>
</dbReference>
<dbReference type="InterPro" id="IPR011547">
    <property type="entry name" value="SLC26A/SulP_dom"/>
</dbReference>
<dbReference type="InterPro" id="IPR001902">
    <property type="entry name" value="SLC26A/SulP_fam"/>
</dbReference>
<dbReference type="InterPro" id="IPR002645">
    <property type="entry name" value="STAS_dom"/>
</dbReference>
<dbReference type="InterPro" id="IPR036513">
    <property type="entry name" value="STAS_dom_sf"/>
</dbReference>
<dbReference type="NCBIfam" id="TIGR00815">
    <property type="entry name" value="sulP"/>
    <property type="match status" value="1"/>
</dbReference>
<dbReference type="PANTHER" id="PTHR11814">
    <property type="entry name" value="SULFATE TRANSPORTER"/>
    <property type="match status" value="1"/>
</dbReference>
<dbReference type="Pfam" id="PF01740">
    <property type="entry name" value="STAS"/>
    <property type="match status" value="1"/>
</dbReference>
<dbReference type="Pfam" id="PF00916">
    <property type="entry name" value="Sulfate_transp"/>
    <property type="match status" value="1"/>
</dbReference>
<dbReference type="SUPFAM" id="SSF52091">
    <property type="entry name" value="SpoIIaa-like"/>
    <property type="match status" value="1"/>
</dbReference>
<dbReference type="PROSITE" id="PS50801">
    <property type="entry name" value="STAS"/>
    <property type="match status" value="1"/>
</dbReference>
<name>S26A9_XENTR</name>
<evidence type="ECO:0000250" key="1">
    <source>
        <dbReference type="UniProtKB" id="Q7LBE3"/>
    </source>
</evidence>
<evidence type="ECO:0000250" key="2">
    <source>
        <dbReference type="UniProtKB" id="Q8BU91"/>
    </source>
</evidence>
<evidence type="ECO:0000255" key="3">
    <source>
        <dbReference type="PROSITE-ProRule" id="PRU00198"/>
    </source>
</evidence>
<evidence type="ECO:0000305" key="4"/>
<accession>A4IIF2</accession>
<protein>
    <recommendedName>
        <fullName>Solute carrier family 26 member 9</fullName>
    </recommendedName>
    <alternativeName>
        <fullName>Anion transporter/exchanger protein 9</fullName>
    </alternativeName>
</protein>
<reference key="1">
    <citation type="submission" date="2007-03" db="EMBL/GenBank/DDBJ databases">
        <authorList>
            <consortium name="NIH - Xenopus Gene Collection (XGC) project"/>
        </authorList>
    </citation>
    <scope>NUCLEOTIDE SEQUENCE [LARGE SCALE MRNA]</scope>
    <source>
        <tissue>Brain</tissue>
    </source>
</reference>